<comment type="function">
    <text evidence="1">Catalyzes the transfer of a dimethylallyl group onto the adenine at position 37 in tRNAs that read codons beginning with uridine, leading to the formation of N6-(dimethylallyl)adenosine (i(6)A).</text>
</comment>
<comment type="catalytic activity">
    <reaction evidence="1">
        <text>adenosine(37) in tRNA + dimethylallyl diphosphate = N(6)-dimethylallyladenosine(37) in tRNA + diphosphate</text>
        <dbReference type="Rhea" id="RHEA:26482"/>
        <dbReference type="Rhea" id="RHEA-COMP:10162"/>
        <dbReference type="Rhea" id="RHEA-COMP:10375"/>
        <dbReference type="ChEBI" id="CHEBI:33019"/>
        <dbReference type="ChEBI" id="CHEBI:57623"/>
        <dbReference type="ChEBI" id="CHEBI:74411"/>
        <dbReference type="ChEBI" id="CHEBI:74415"/>
        <dbReference type="EC" id="2.5.1.75"/>
    </reaction>
</comment>
<comment type="cofactor">
    <cofactor evidence="1">
        <name>Mg(2+)</name>
        <dbReference type="ChEBI" id="CHEBI:18420"/>
    </cofactor>
</comment>
<comment type="subunit">
    <text evidence="1">Monomer.</text>
</comment>
<comment type="similarity">
    <text evidence="1">Belongs to the IPP transferase family.</text>
</comment>
<dbReference type="EC" id="2.5.1.75" evidence="1"/>
<dbReference type="EMBL" id="FM209186">
    <property type="protein sequence ID" value="CAW30085.1"/>
    <property type="molecule type" value="Genomic_DNA"/>
</dbReference>
<dbReference type="RefSeq" id="WP_003113929.1">
    <property type="nucleotide sequence ID" value="NC_011770.1"/>
</dbReference>
<dbReference type="SMR" id="B7V208"/>
<dbReference type="KEGG" id="pag:PLES_53311"/>
<dbReference type="HOGENOM" id="CLU_032616_0_0_6"/>
<dbReference type="GO" id="GO:0005524">
    <property type="term" value="F:ATP binding"/>
    <property type="evidence" value="ECO:0007669"/>
    <property type="project" value="UniProtKB-UniRule"/>
</dbReference>
<dbReference type="GO" id="GO:0052381">
    <property type="term" value="F:tRNA dimethylallyltransferase activity"/>
    <property type="evidence" value="ECO:0007669"/>
    <property type="project" value="UniProtKB-UniRule"/>
</dbReference>
<dbReference type="GO" id="GO:0006400">
    <property type="term" value="P:tRNA modification"/>
    <property type="evidence" value="ECO:0007669"/>
    <property type="project" value="TreeGrafter"/>
</dbReference>
<dbReference type="FunFam" id="1.10.20.140:FF:000001">
    <property type="entry name" value="tRNA dimethylallyltransferase"/>
    <property type="match status" value="1"/>
</dbReference>
<dbReference type="Gene3D" id="1.10.20.140">
    <property type="match status" value="1"/>
</dbReference>
<dbReference type="Gene3D" id="3.40.50.300">
    <property type="entry name" value="P-loop containing nucleotide triphosphate hydrolases"/>
    <property type="match status" value="1"/>
</dbReference>
<dbReference type="HAMAP" id="MF_00185">
    <property type="entry name" value="IPP_trans"/>
    <property type="match status" value="1"/>
</dbReference>
<dbReference type="InterPro" id="IPR039657">
    <property type="entry name" value="Dimethylallyltransferase"/>
</dbReference>
<dbReference type="InterPro" id="IPR018022">
    <property type="entry name" value="IPT"/>
</dbReference>
<dbReference type="InterPro" id="IPR027417">
    <property type="entry name" value="P-loop_NTPase"/>
</dbReference>
<dbReference type="NCBIfam" id="TIGR00174">
    <property type="entry name" value="miaA"/>
    <property type="match status" value="1"/>
</dbReference>
<dbReference type="PANTHER" id="PTHR11088">
    <property type="entry name" value="TRNA DIMETHYLALLYLTRANSFERASE"/>
    <property type="match status" value="1"/>
</dbReference>
<dbReference type="PANTHER" id="PTHR11088:SF60">
    <property type="entry name" value="TRNA DIMETHYLALLYLTRANSFERASE"/>
    <property type="match status" value="1"/>
</dbReference>
<dbReference type="Pfam" id="PF01715">
    <property type="entry name" value="IPPT"/>
    <property type="match status" value="1"/>
</dbReference>
<dbReference type="SUPFAM" id="SSF52540">
    <property type="entry name" value="P-loop containing nucleoside triphosphate hydrolases"/>
    <property type="match status" value="1"/>
</dbReference>
<name>MIAA_PSEA8</name>
<accession>B7V208</accession>
<proteinExistence type="inferred from homology"/>
<organism>
    <name type="scientific">Pseudomonas aeruginosa (strain LESB58)</name>
    <dbReference type="NCBI Taxonomy" id="557722"/>
    <lineage>
        <taxon>Bacteria</taxon>
        <taxon>Pseudomonadati</taxon>
        <taxon>Pseudomonadota</taxon>
        <taxon>Gammaproteobacteria</taxon>
        <taxon>Pseudomonadales</taxon>
        <taxon>Pseudomonadaceae</taxon>
        <taxon>Pseudomonas</taxon>
    </lineage>
</organism>
<protein>
    <recommendedName>
        <fullName evidence="1">tRNA dimethylallyltransferase</fullName>
        <ecNumber evidence="1">2.5.1.75</ecNumber>
    </recommendedName>
    <alternativeName>
        <fullName evidence="1">Dimethylallyl diphosphate:tRNA dimethylallyltransferase</fullName>
        <shortName evidence="1">DMAPP:tRNA dimethylallyltransferase</shortName>
        <shortName evidence="1">DMATase</shortName>
    </alternativeName>
    <alternativeName>
        <fullName evidence="1">Isopentenyl-diphosphate:tRNA isopentenyltransferase</fullName>
        <shortName evidence="1">IPP transferase</shortName>
        <shortName evidence="1">IPPT</shortName>
        <shortName evidence="1">IPTase</shortName>
    </alternativeName>
</protein>
<reference key="1">
    <citation type="journal article" date="2009" name="Genome Res.">
        <title>Newly introduced genomic prophage islands are critical determinants of in vivo competitiveness in the Liverpool epidemic strain of Pseudomonas aeruginosa.</title>
        <authorList>
            <person name="Winstanley C."/>
            <person name="Langille M.G.I."/>
            <person name="Fothergill J.L."/>
            <person name="Kukavica-Ibrulj I."/>
            <person name="Paradis-Bleau C."/>
            <person name="Sanschagrin F."/>
            <person name="Thomson N.R."/>
            <person name="Winsor G.L."/>
            <person name="Quail M.A."/>
            <person name="Lennard N."/>
            <person name="Bignell A."/>
            <person name="Clarke L."/>
            <person name="Seeger K."/>
            <person name="Saunders D."/>
            <person name="Harris D."/>
            <person name="Parkhill J."/>
            <person name="Hancock R.E.W."/>
            <person name="Brinkman F.S.L."/>
            <person name="Levesque R.C."/>
        </authorList>
    </citation>
    <scope>NUCLEOTIDE SEQUENCE [LARGE SCALE GENOMIC DNA]</scope>
    <source>
        <strain>LESB58</strain>
    </source>
</reference>
<gene>
    <name evidence="1" type="primary">miaA</name>
    <name type="ordered locus">PLES_53311</name>
</gene>
<evidence type="ECO:0000255" key="1">
    <source>
        <dbReference type="HAMAP-Rule" id="MF_00185"/>
    </source>
</evidence>
<feature type="chain" id="PRO_1000191863" description="tRNA dimethylallyltransferase">
    <location>
        <begin position="1"/>
        <end position="323"/>
    </location>
</feature>
<feature type="region of interest" description="Interaction with substrate tRNA" evidence="1">
    <location>
        <begin position="37"/>
        <end position="40"/>
    </location>
</feature>
<feature type="region of interest" description="Interaction with substrate tRNA" evidence="1">
    <location>
        <begin position="161"/>
        <end position="165"/>
    </location>
</feature>
<feature type="binding site" evidence="1">
    <location>
        <begin position="12"/>
        <end position="19"/>
    </location>
    <ligand>
        <name>ATP</name>
        <dbReference type="ChEBI" id="CHEBI:30616"/>
    </ligand>
</feature>
<feature type="binding site" evidence="1">
    <location>
        <begin position="14"/>
        <end position="19"/>
    </location>
    <ligand>
        <name>substrate</name>
    </ligand>
</feature>
<feature type="site" description="Interaction with substrate tRNA" evidence="1">
    <location>
        <position position="103"/>
    </location>
</feature>
<feature type="site" description="Interaction with substrate tRNA" evidence="1">
    <location>
        <position position="125"/>
    </location>
</feature>
<sequence length="323" mass="35769">MSSLPPAIFLMGPTAAGKTDLAMALADALPCELISVDSALIYRGMDIGTAKPSRELLARYPHRLIDIRDPAESYSAAEFRADALAAMAKATARGRIPLLVGGTMLYYKALLEGLADMPGADPEVRAAIEAEAQAEGWEALHRQLAEVDPESAARIHPNDPQRLMRALEVYRLGGVSMSDLRRRQSAEKADFDASGRNQLPYTVAQLAIAPEQRQVLHARIAQRFRQMLEQGFIAEVEALHARSDLHAGLPSIRAVGYRQVWDYLDGKLSYAEMTERGIIATRQLAKRQFTWLRSWSHLHWMDSLAGDNLPRALKYLKTVSILA</sequence>
<keyword id="KW-0067">ATP-binding</keyword>
<keyword id="KW-0460">Magnesium</keyword>
<keyword id="KW-0547">Nucleotide-binding</keyword>
<keyword id="KW-0808">Transferase</keyword>
<keyword id="KW-0819">tRNA processing</keyword>